<accession>Q05101</accession>
<evidence type="ECO:0000250" key="1"/>
<evidence type="ECO:0000255" key="2">
    <source>
        <dbReference type="PROSITE-ProRule" id="PRU00159"/>
    </source>
</evidence>
<evidence type="ECO:0000255" key="3">
    <source>
        <dbReference type="PROSITE-ProRule" id="PRU10027"/>
    </source>
</evidence>
<evidence type="ECO:0000256" key="4">
    <source>
        <dbReference type="SAM" id="MobiDB-lite"/>
    </source>
</evidence>
<evidence type="ECO:0000269" key="5">
    <source>
    </source>
</evidence>
<organism>
    <name type="scientific">Gallid herpesvirus 2 (strain GA)</name>
    <name type="common">GaHV-2</name>
    <name type="synonym">Marek's disease herpesvirus type 1</name>
    <dbReference type="NCBI Taxonomy" id="10388"/>
    <lineage>
        <taxon>Viruses</taxon>
        <taxon>Duplodnaviria</taxon>
        <taxon>Heunggongvirae</taxon>
        <taxon>Peploviricota</taxon>
        <taxon>Herviviricetes</taxon>
        <taxon>Herpesvirales</taxon>
        <taxon>Orthoherpesviridae</taxon>
        <taxon>Alphaherpesvirinae</taxon>
        <taxon>Mardivirus</taxon>
        <taxon>Mardivirus gallidalpha2</taxon>
        <taxon>Gallid alphaherpesvirus 2</taxon>
    </lineage>
</organism>
<protein>
    <recommendedName>
        <fullName>Serine/threonine-protein kinase US3 homolog</fullName>
        <ecNumber>2.7.11.1</ecNumber>
    </recommendedName>
</protein>
<comment type="function">
    <text evidence="1 5">Multifunctional serine/threonine kinase that plays a role in several processes including egress of virus particles from the nucleus, modulation of the actin cytoskeleton and inhibition of apoptosis. Phosphorylates UL31 and UL34 homologs, two critical regulators of capsid budding from nucleus to endoplasmic reticulum, thereby facilitating virion egress. Modulates and redistributes host components of the nuclear envelope, including LMNA, emerin/EMD and the nuclear matrix protein MATR3. Phosphorylates envelope glycoprotein B (gB), probably to direct it to the cell surface. Promotes virus intracellular spread by restructuring host cell cytoskeleton. Blocks host apoptosis to extend cell survival and allow efficient viral replication. Promotes viral gene expression by phosphorylating host HDAC2 to reduce viral genome silencing (By similarity).</text>
</comment>
<comment type="catalytic activity">
    <reaction>
        <text>L-seryl-[protein] + ATP = O-phospho-L-seryl-[protein] + ADP + H(+)</text>
        <dbReference type="Rhea" id="RHEA:17989"/>
        <dbReference type="Rhea" id="RHEA-COMP:9863"/>
        <dbReference type="Rhea" id="RHEA-COMP:11604"/>
        <dbReference type="ChEBI" id="CHEBI:15378"/>
        <dbReference type="ChEBI" id="CHEBI:29999"/>
        <dbReference type="ChEBI" id="CHEBI:30616"/>
        <dbReference type="ChEBI" id="CHEBI:83421"/>
        <dbReference type="ChEBI" id="CHEBI:456216"/>
        <dbReference type="EC" id="2.7.11.1"/>
    </reaction>
</comment>
<comment type="catalytic activity">
    <reaction>
        <text>L-threonyl-[protein] + ATP = O-phospho-L-threonyl-[protein] + ADP + H(+)</text>
        <dbReference type="Rhea" id="RHEA:46608"/>
        <dbReference type="Rhea" id="RHEA-COMP:11060"/>
        <dbReference type="Rhea" id="RHEA-COMP:11605"/>
        <dbReference type="ChEBI" id="CHEBI:15378"/>
        <dbReference type="ChEBI" id="CHEBI:30013"/>
        <dbReference type="ChEBI" id="CHEBI:30616"/>
        <dbReference type="ChEBI" id="CHEBI:61977"/>
        <dbReference type="ChEBI" id="CHEBI:456216"/>
        <dbReference type="EC" id="2.7.11.1"/>
    </reaction>
</comment>
<comment type="subcellular location">
    <subcellularLocation>
        <location evidence="1">Host cytoplasm</location>
    </subcellularLocation>
    <subcellularLocation>
        <location evidence="1">Host nucleus</location>
    </subcellularLocation>
</comment>
<comment type="PTM">
    <text evidence="1">Phosphorylated by UL13 homolog; this phosphorylation regulates subsequent phosphorylation of UL31 and UL34 homologs by US3. Autophosphorylated (By similarity).</text>
</comment>
<comment type="similarity">
    <text evidence="2">Belongs to the protein kinase superfamily. Ser/Thr protein kinase family.</text>
</comment>
<reference key="1">
    <citation type="journal article" date="1992" name="Virus Genes">
        <title>Sequence determination and genetic content of an 8.9-kb restriction fragment in the short unique region and the internal inverted repeat of Marek's disease virus type 1 DNA.</title>
        <authorList>
            <person name="Sakaguchi M."/>
            <person name="Urakawa T."/>
            <person name="Hirayama Y."/>
            <person name="Miki N."/>
            <person name="Yamamoto M."/>
            <person name="Hirai K."/>
        </authorList>
    </citation>
    <scope>NUCLEOTIDE SEQUENCE [GENOMIC DNA]</scope>
</reference>
<reference key="2">
    <citation type="journal article" date="1995" name="Virology">
        <title>The Marek's disease virus (MDV) unique short region: alphaherpesvirus-homologous, fowlpox virus-homologous, and MDV-specific genes.</title>
        <authorList>
            <person name="Brunovskis P."/>
            <person name="Velicer L.F."/>
        </authorList>
    </citation>
    <scope>NUCLEOTIDE SEQUENCE [GENOMIC DNA]</scope>
</reference>
<reference key="3">
    <citation type="journal article" date="2005" name="J. Virol.">
        <title>The protein encoded by the US3 orthologue of Marek's disease virus is required for efficient de-envelopment of perinuclear virions and involved in actin stress fiber breakdown.</title>
        <authorList>
            <person name="Schumacher D."/>
            <person name="Tischer B.K."/>
            <person name="Trapp S."/>
            <person name="Osterrieder N."/>
        </authorList>
    </citation>
    <scope>FUNCTION</scope>
</reference>
<sequence>MSSTPEAETMECGISSSKVHDSKTNTTYGIIHNSINGTDTTLFDTFPDSTDNAEVTGDVDDVKTESSPESQSEDLSPFGNDGNESPETVTDIDAVSAVRMQYNIVSSLPPGSEGYIYVCTKRGDNTKRKVIVKAVTGGKTLGSEIDILKKMSHRSIIRLVHAYRWKSTVCMVMPKYKCDLFTYIDIMGPLPLNQIITIERGLLGALAYIHEKGIIHRDVKTENIFLDKPENVVLGDFGAACKLDEHTDKPKCYGWSGTLETNSPELLALDPYCTKTDIWSAGLVLFEMSVKNITFFGKQVNGSGSQLRSIIRCLQVHPLEFPQNNSTNLCKHFKQYAIQLRHPYAIPQIIRKSGMTMDLEYAIAKMLTFDQEFRPSAQDILMLPLFTKEPADALYTITAAHM</sequence>
<organismHost>
    <name type="scientific">Gallus gallus</name>
    <name type="common">Chicken</name>
    <dbReference type="NCBI Taxonomy" id="9031"/>
</organismHost>
<gene>
    <name type="primary">US1206</name>
    <name type="synonym">US3</name>
</gene>
<proteinExistence type="inferred from homology"/>
<feature type="chain" id="PRO_0000086776" description="Serine/threonine-protein kinase US3 homolog">
    <location>
        <begin position="1"/>
        <end position="402"/>
    </location>
</feature>
<feature type="domain" description="Protein kinase" evidence="2">
    <location>
        <begin position="102"/>
        <end position="386"/>
    </location>
</feature>
<feature type="region of interest" description="Disordered" evidence="4">
    <location>
        <begin position="1"/>
        <end position="21"/>
    </location>
</feature>
<feature type="region of interest" description="Disordered" evidence="4">
    <location>
        <begin position="46"/>
        <end position="88"/>
    </location>
</feature>
<feature type="active site" description="Proton acceptor" evidence="2 3">
    <location>
        <position position="218"/>
    </location>
</feature>
<feature type="binding site" evidence="2">
    <location>
        <begin position="110"/>
        <end position="118"/>
    </location>
    <ligand>
        <name>ATP</name>
        <dbReference type="ChEBI" id="CHEBI:30616"/>
    </ligand>
</feature>
<feature type="binding site" evidence="2">
    <location>
        <position position="127"/>
    </location>
    <ligand>
        <name>ATP</name>
        <dbReference type="ChEBI" id="CHEBI:30616"/>
    </ligand>
</feature>
<keyword id="KW-0067">ATP-binding</keyword>
<keyword id="KW-1035">Host cytoplasm</keyword>
<keyword id="KW-1048">Host nucleus</keyword>
<keyword id="KW-0945">Host-virus interaction</keyword>
<keyword id="KW-0418">Kinase</keyword>
<keyword id="KW-1119">Modulation of host cell apoptosis by virus</keyword>
<keyword id="KW-1122">Modulation of host chromatin by virus</keyword>
<keyword id="KW-0547">Nucleotide-binding</keyword>
<keyword id="KW-0723">Serine/threonine-protein kinase</keyword>
<keyword id="KW-0808">Transferase</keyword>
<dbReference type="EC" id="2.7.11.1"/>
<dbReference type="EMBL" id="M80595">
    <property type="protein sequence ID" value="AAB59895.1"/>
    <property type="molecule type" value="Genomic_DNA"/>
</dbReference>
<dbReference type="EMBL" id="L22174">
    <property type="protein sequence ID" value="AAA64965.1"/>
    <property type="molecule type" value="Genomic_DNA"/>
</dbReference>
<dbReference type="SMR" id="Q05101"/>
<dbReference type="GO" id="GO:0030430">
    <property type="term" value="C:host cell cytoplasm"/>
    <property type="evidence" value="ECO:0007669"/>
    <property type="project" value="UniProtKB-SubCell"/>
</dbReference>
<dbReference type="GO" id="GO:0042025">
    <property type="term" value="C:host cell nucleus"/>
    <property type="evidence" value="ECO:0007669"/>
    <property type="project" value="UniProtKB-SubCell"/>
</dbReference>
<dbReference type="GO" id="GO:0005524">
    <property type="term" value="F:ATP binding"/>
    <property type="evidence" value="ECO:0007669"/>
    <property type="project" value="UniProtKB-KW"/>
</dbReference>
<dbReference type="GO" id="GO:0106310">
    <property type="term" value="F:protein serine kinase activity"/>
    <property type="evidence" value="ECO:0007669"/>
    <property type="project" value="RHEA"/>
</dbReference>
<dbReference type="GO" id="GO:0004674">
    <property type="term" value="F:protein serine/threonine kinase activity"/>
    <property type="evidence" value="ECO:0007669"/>
    <property type="project" value="UniProtKB-KW"/>
</dbReference>
<dbReference type="GO" id="GO:0052150">
    <property type="term" value="P:symbiont-mediated perturbation of host apoptosis"/>
    <property type="evidence" value="ECO:0007669"/>
    <property type="project" value="UniProtKB-KW"/>
</dbReference>
<dbReference type="GO" id="GO:0039525">
    <property type="term" value="P:symbiont-mediated perturbation of host chromatin organization"/>
    <property type="evidence" value="ECO:0007669"/>
    <property type="project" value="UniProtKB-KW"/>
</dbReference>
<dbReference type="CDD" id="cd00180">
    <property type="entry name" value="PKc"/>
    <property type="match status" value="1"/>
</dbReference>
<dbReference type="Gene3D" id="3.30.200.20">
    <property type="entry name" value="Phosphorylase Kinase, domain 1"/>
    <property type="match status" value="1"/>
</dbReference>
<dbReference type="Gene3D" id="1.10.510.10">
    <property type="entry name" value="Transferase(Phosphotransferase) domain 1"/>
    <property type="match status" value="1"/>
</dbReference>
<dbReference type="InterPro" id="IPR011009">
    <property type="entry name" value="Kinase-like_dom_sf"/>
</dbReference>
<dbReference type="InterPro" id="IPR000719">
    <property type="entry name" value="Prot_kinase_dom"/>
</dbReference>
<dbReference type="InterPro" id="IPR008271">
    <property type="entry name" value="Ser/Thr_kinase_AS"/>
</dbReference>
<dbReference type="PANTHER" id="PTHR44167">
    <property type="entry name" value="OVARIAN-SPECIFIC SERINE/THREONINE-PROTEIN KINASE LOK-RELATED"/>
    <property type="match status" value="1"/>
</dbReference>
<dbReference type="PANTHER" id="PTHR44167:SF24">
    <property type="entry name" value="SERINE_THREONINE-PROTEIN KINASE CHK2"/>
    <property type="match status" value="1"/>
</dbReference>
<dbReference type="Pfam" id="PF00069">
    <property type="entry name" value="Pkinase"/>
    <property type="match status" value="1"/>
</dbReference>
<dbReference type="SMART" id="SM00220">
    <property type="entry name" value="S_TKc"/>
    <property type="match status" value="1"/>
</dbReference>
<dbReference type="SUPFAM" id="SSF56112">
    <property type="entry name" value="Protein kinase-like (PK-like)"/>
    <property type="match status" value="1"/>
</dbReference>
<dbReference type="PROSITE" id="PS50011">
    <property type="entry name" value="PROTEIN_KINASE_DOM"/>
    <property type="match status" value="1"/>
</dbReference>
<dbReference type="PROSITE" id="PS00108">
    <property type="entry name" value="PROTEIN_KINASE_ST"/>
    <property type="match status" value="1"/>
</dbReference>
<name>US03_GAHVG</name>